<accession>Q19907</accession>
<proteinExistence type="evidence at protein level"/>
<feature type="chain" id="PRO_0000390697" description="TWiK family of potassium channels protein 12">
    <location>
        <begin position="1"/>
        <end position="713"/>
    </location>
</feature>
<feature type="topological domain" description="Cytoplasmic" evidence="1">
    <location>
        <begin position="1"/>
        <end position="15"/>
    </location>
</feature>
<feature type="transmembrane region" description="Helical" evidence="1">
    <location>
        <begin position="16"/>
        <end position="36"/>
    </location>
</feature>
<feature type="intramembrane region" description="Pore-forming; Name=Pore-forming 1" evidence="1">
    <location>
        <begin position="112"/>
        <end position="132"/>
    </location>
</feature>
<feature type="transmembrane region" description="Helical" evidence="1">
    <location>
        <begin position="142"/>
        <end position="162"/>
    </location>
</feature>
<feature type="topological domain" description="Cytoplasmic" evidence="1">
    <location>
        <begin position="163"/>
        <end position="242"/>
    </location>
</feature>
<feature type="transmembrane region" description="Helical" evidence="1">
    <location>
        <begin position="243"/>
        <end position="263"/>
    </location>
</feature>
<feature type="intramembrane region" description="Pore-forming; Name=Pore-forming 2" evidence="1">
    <location>
        <begin position="267"/>
        <end position="287"/>
    </location>
</feature>
<feature type="transmembrane region" description="Helical" evidence="1">
    <location>
        <begin position="298"/>
        <end position="318"/>
    </location>
</feature>
<feature type="topological domain" description="Cytoplasmic" evidence="1">
    <location>
        <begin position="319"/>
        <end position="713"/>
    </location>
</feature>
<feature type="glycosylation site" description="N-linked (GlcNAc...) asparagine" evidence="2">
    <location>
        <position position="53"/>
    </location>
</feature>
<feature type="glycosylation site" description="N-linked (GlcNAc...) asparagine" evidence="2">
    <location>
        <position position="77"/>
    </location>
</feature>
<feature type="glycosylation site" description="N-linked (GlcNAc...) asparagine" evidence="1">
    <location>
        <position position="98"/>
    </location>
</feature>
<name>TWK12_CAEEL</name>
<evidence type="ECO:0000255" key="1"/>
<evidence type="ECO:0000269" key="2">
    <source>
    </source>
</evidence>
<evidence type="ECO:0000305" key="3"/>
<evidence type="ECO:0000312" key="4">
    <source>
        <dbReference type="EMBL" id="CAA98271.2"/>
    </source>
</evidence>
<gene>
    <name type="primary">twk-12</name>
    <name type="ORF">F29F11.4</name>
</gene>
<protein>
    <recommendedName>
        <fullName>TWiK family of potassium channels protein 12</fullName>
    </recommendedName>
</protein>
<reference evidence="4" key="1">
    <citation type="journal article" date="1998" name="Science">
        <title>Genome sequence of the nematode C. elegans: a platform for investigating biology.</title>
        <authorList>
            <consortium name="The C. elegans sequencing consortium"/>
        </authorList>
    </citation>
    <scope>NUCLEOTIDE SEQUENCE [LARGE SCALE GENOMIC DNA]</scope>
    <source>
        <strain>Bristol N2</strain>
    </source>
</reference>
<reference evidence="3" key="2">
    <citation type="journal article" date="2007" name="Mol. Cell. Proteomics">
        <title>Proteomics reveals N-linked glycoprotein diversity in Caenorhabditis elegans and suggests an atypical translocation mechanism for integral membrane proteins.</title>
        <authorList>
            <person name="Kaji H."/>
            <person name="Kamiie J."/>
            <person name="Kawakami H."/>
            <person name="Kido K."/>
            <person name="Yamauchi Y."/>
            <person name="Shinkawa T."/>
            <person name="Taoka M."/>
            <person name="Takahashi N."/>
            <person name="Isobe T."/>
        </authorList>
    </citation>
    <scope>GLYCOSYLATION [LARGE SCALE ANALYSIS] AT ASN-53 AND ASN-77</scope>
    <scope>IDENTIFICATION BY MASS SPECTROMETRY</scope>
    <source>
        <strain>Bristol N2</strain>
    </source>
</reference>
<dbReference type="EMBL" id="Z73974">
    <property type="protein sequence ID" value="CAA98271.2"/>
    <property type="molecule type" value="Genomic_DNA"/>
</dbReference>
<dbReference type="PIR" id="T21551">
    <property type="entry name" value="T21551"/>
</dbReference>
<dbReference type="RefSeq" id="NP_505731.3">
    <property type="nucleotide sequence ID" value="NM_073330.4"/>
</dbReference>
<dbReference type="BioGRID" id="56566">
    <property type="interactions" value="1"/>
</dbReference>
<dbReference type="FunCoup" id="Q19907">
    <property type="interactions" value="182"/>
</dbReference>
<dbReference type="STRING" id="6239.F29F11.4.1"/>
<dbReference type="TCDB" id="1.A.1.9.9">
    <property type="family name" value="the voltage-gated ion channel (vic) superfamily"/>
</dbReference>
<dbReference type="GlyCosmos" id="Q19907">
    <property type="glycosylation" value="3 sites, No reported glycans"/>
</dbReference>
<dbReference type="iPTMnet" id="Q19907"/>
<dbReference type="PaxDb" id="6239-F29F11.4"/>
<dbReference type="EnsemblMetazoa" id="F29F11.4.1">
    <property type="protein sequence ID" value="F29F11.4.1"/>
    <property type="gene ID" value="WBGene00006667"/>
</dbReference>
<dbReference type="GeneID" id="192074"/>
<dbReference type="KEGG" id="cel:CELE_F29F11.4"/>
<dbReference type="UCSC" id="F29F11.4">
    <property type="organism name" value="c. elegans"/>
</dbReference>
<dbReference type="AGR" id="WB:WBGene00006667"/>
<dbReference type="CTD" id="192074"/>
<dbReference type="WormBase" id="F29F11.4">
    <property type="protein sequence ID" value="CE48353"/>
    <property type="gene ID" value="WBGene00006667"/>
    <property type="gene designation" value="twk-12"/>
</dbReference>
<dbReference type="eggNOG" id="KOG1418">
    <property type="taxonomic scope" value="Eukaryota"/>
</dbReference>
<dbReference type="InParanoid" id="Q19907"/>
<dbReference type="OrthoDB" id="297496at2759"/>
<dbReference type="PRO" id="PR:Q19907"/>
<dbReference type="Proteomes" id="UP000001940">
    <property type="component" value="Chromosome V"/>
</dbReference>
<dbReference type="Bgee" id="WBGene00006667">
    <property type="expression patterns" value="Expressed in pharyngeal muscle cell (C elegans) and 3 other cell types or tissues"/>
</dbReference>
<dbReference type="GO" id="GO:0005886">
    <property type="term" value="C:plasma membrane"/>
    <property type="evidence" value="ECO:0000318"/>
    <property type="project" value="GO_Central"/>
</dbReference>
<dbReference type="GO" id="GO:0015271">
    <property type="term" value="F:outward rectifier potassium channel activity"/>
    <property type="evidence" value="ECO:0000318"/>
    <property type="project" value="GO_Central"/>
</dbReference>
<dbReference type="GO" id="GO:0022841">
    <property type="term" value="F:potassium ion leak channel activity"/>
    <property type="evidence" value="ECO:0000318"/>
    <property type="project" value="GO_Central"/>
</dbReference>
<dbReference type="GO" id="GO:0071805">
    <property type="term" value="P:potassium ion transmembrane transport"/>
    <property type="evidence" value="ECO:0000318"/>
    <property type="project" value="GO_Central"/>
</dbReference>
<dbReference type="FunFam" id="1.10.287.70:FF:000332">
    <property type="entry name" value="TWiK family of potassium channels protein 12"/>
    <property type="match status" value="1"/>
</dbReference>
<dbReference type="Gene3D" id="1.10.287.70">
    <property type="match status" value="1"/>
</dbReference>
<dbReference type="InterPro" id="IPR003280">
    <property type="entry name" value="2pore_dom_K_chnl"/>
</dbReference>
<dbReference type="InterPro" id="IPR013099">
    <property type="entry name" value="K_chnl_dom"/>
</dbReference>
<dbReference type="PANTHER" id="PTHR11003">
    <property type="entry name" value="POTASSIUM CHANNEL, SUBFAMILY K"/>
    <property type="match status" value="1"/>
</dbReference>
<dbReference type="PANTHER" id="PTHR11003:SF152">
    <property type="entry name" value="TWIK FAMILY OF POTASSIUM CHANNELS PROTEIN 12"/>
    <property type="match status" value="1"/>
</dbReference>
<dbReference type="Pfam" id="PF07885">
    <property type="entry name" value="Ion_trans_2"/>
    <property type="match status" value="2"/>
</dbReference>
<dbReference type="PRINTS" id="PR01333">
    <property type="entry name" value="2POREKCHANEL"/>
</dbReference>
<dbReference type="SUPFAM" id="SSF81324">
    <property type="entry name" value="Voltage-gated potassium channels"/>
    <property type="match status" value="2"/>
</dbReference>
<sequence length="713" mass="82068">MTLFKKIQWFCNLIRLRSYYKFLLLIAYTAFGAWLFRTYELQADIKRRSVFGNTTNLVRRQLAERWIEMHKDAVLRNDSALRFRRAAEAVEWLLDELNLSDHIRDLSEETPWTWTGAMFYAGQLYTTIGYGYPTTKTDEGRICTIFYALFGIPCFLMYLKIENAIEWKKDKQLGKRALKMHGLINDSFQSIGKTLSKKMKKYYKKLRRSRVGRILLPTRVTAMKDGFEDPEAAEERKKKPFPIPIAIIMLIIWICFSASMFCIWEDTWVFSSAVYFFIVSISTVGLGDMLFRTPDMMVFNFLLILVGLALLSMCFELITDRVAKWKQKRFDEHIKKVQKMAFQVFEKDPFIEEAPPLGIRMAPNLMQIAATHVSEEKRGFFAEFKDWFAGKVTDNVIQSKLEDSDDESDSEEALEEFDSPQIATVTANDLIVCSNGAATRRVSKQSYALSDISNLSNSKILPGNNYGQLLDRIKAMEKFKPKKNDLDSRMFAKFLENKKLAKILEQTELRELATVSCQTDLSGLVVQRRNPKGRHARIGSCSSQSTMSTLLPNKMHAPDEDSVMSFTFGDLKFDYKTEPFIDEYYIRESNHSIFDFDEDETVRIPQKMLISRPGMPPPPPSRPLNLASPLRTLLEKEQKYDEDPEIQLTPRRLNSLSDIQARKVKLGVDENLQHARLVCGLLPQDFDSPSTSTSTSMIDSGYELSKRDASTMA</sequence>
<organism>
    <name type="scientific">Caenorhabditis elegans</name>
    <dbReference type="NCBI Taxonomy" id="6239"/>
    <lineage>
        <taxon>Eukaryota</taxon>
        <taxon>Metazoa</taxon>
        <taxon>Ecdysozoa</taxon>
        <taxon>Nematoda</taxon>
        <taxon>Chromadorea</taxon>
        <taxon>Rhabditida</taxon>
        <taxon>Rhabditina</taxon>
        <taxon>Rhabditomorpha</taxon>
        <taxon>Rhabditoidea</taxon>
        <taxon>Rhabditidae</taxon>
        <taxon>Peloderinae</taxon>
        <taxon>Caenorhabditis</taxon>
    </lineage>
</organism>
<keyword id="KW-0325">Glycoprotein</keyword>
<keyword id="KW-0407">Ion channel</keyword>
<keyword id="KW-0406">Ion transport</keyword>
<keyword id="KW-0472">Membrane</keyword>
<keyword id="KW-0630">Potassium</keyword>
<keyword id="KW-0631">Potassium channel</keyword>
<keyword id="KW-0633">Potassium transport</keyword>
<keyword id="KW-1185">Reference proteome</keyword>
<keyword id="KW-0812">Transmembrane</keyword>
<keyword id="KW-1133">Transmembrane helix</keyword>
<keyword id="KW-0813">Transport</keyword>
<comment type="subcellular location">
    <subcellularLocation>
        <location evidence="1">Membrane</location>
        <topology evidence="1">Multi-pass membrane protein</topology>
    </subcellularLocation>
</comment>
<comment type="similarity">
    <text evidence="1">Belongs to the two pore domain potassium channel (TC 1.A.1.8) family.</text>
</comment>